<comment type="function">
    <text evidence="1">Succinyl-CoA synthetase functions in the citric acid cycle (TCA), coupling the hydrolysis of succinyl-CoA to the synthesis of either ATP or GTP and thus represents the only step of substrate-level phosphorylation in the TCA. The beta subunit provides nucleotide specificity of the enzyme and binds the substrate succinate, while the binding sites for coenzyme A and phosphate are found in the alpha subunit.</text>
</comment>
<comment type="catalytic activity">
    <reaction evidence="1">
        <text>succinate + ATP + CoA = succinyl-CoA + ADP + phosphate</text>
        <dbReference type="Rhea" id="RHEA:17661"/>
        <dbReference type="ChEBI" id="CHEBI:30031"/>
        <dbReference type="ChEBI" id="CHEBI:30616"/>
        <dbReference type="ChEBI" id="CHEBI:43474"/>
        <dbReference type="ChEBI" id="CHEBI:57287"/>
        <dbReference type="ChEBI" id="CHEBI:57292"/>
        <dbReference type="ChEBI" id="CHEBI:456216"/>
        <dbReference type="EC" id="6.2.1.5"/>
    </reaction>
    <physiologicalReaction direction="right-to-left" evidence="1">
        <dbReference type="Rhea" id="RHEA:17663"/>
    </physiologicalReaction>
</comment>
<comment type="catalytic activity">
    <reaction evidence="1">
        <text>GTP + succinate + CoA = succinyl-CoA + GDP + phosphate</text>
        <dbReference type="Rhea" id="RHEA:22120"/>
        <dbReference type="ChEBI" id="CHEBI:30031"/>
        <dbReference type="ChEBI" id="CHEBI:37565"/>
        <dbReference type="ChEBI" id="CHEBI:43474"/>
        <dbReference type="ChEBI" id="CHEBI:57287"/>
        <dbReference type="ChEBI" id="CHEBI:57292"/>
        <dbReference type="ChEBI" id="CHEBI:58189"/>
    </reaction>
    <physiologicalReaction direction="right-to-left" evidence="1">
        <dbReference type="Rhea" id="RHEA:22122"/>
    </physiologicalReaction>
</comment>
<comment type="cofactor">
    <cofactor evidence="1">
        <name>Mg(2+)</name>
        <dbReference type="ChEBI" id="CHEBI:18420"/>
    </cofactor>
    <text evidence="1">Binds 1 Mg(2+) ion per subunit.</text>
</comment>
<comment type="pathway">
    <text evidence="1">Carbohydrate metabolism; tricarboxylic acid cycle; succinate from succinyl-CoA (ligase route): step 1/1.</text>
</comment>
<comment type="subunit">
    <text evidence="1">Heterotetramer of two alpha and two beta subunits.</text>
</comment>
<comment type="similarity">
    <text evidence="1">Belongs to the succinate/malate CoA ligase beta subunit family.</text>
</comment>
<accession>Q3BQ83</accession>
<feature type="chain" id="PRO_1000082261" description="Succinate--CoA ligase [ADP-forming] subunit beta">
    <location>
        <begin position="1"/>
        <end position="389"/>
    </location>
</feature>
<feature type="domain" description="ATP-grasp" evidence="1">
    <location>
        <begin position="9"/>
        <end position="244"/>
    </location>
</feature>
<feature type="binding site" evidence="1">
    <location>
        <position position="46"/>
    </location>
    <ligand>
        <name>ATP</name>
        <dbReference type="ChEBI" id="CHEBI:30616"/>
    </ligand>
</feature>
<feature type="binding site" evidence="1">
    <location>
        <begin position="53"/>
        <end position="55"/>
    </location>
    <ligand>
        <name>ATP</name>
        <dbReference type="ChEBI" id="CHEBI:30616"/>
    </ligand>
</feature>
<feature type="binding site" evidence="1">
    <location>
        <position position="102"/>
    </location>
    <ligand>
        <name>ATP</name>
        <dbReference type="ChEBI" id="CHEBI:30616"/>
    </ligand>
</feature>
<feature type="binding site" evidence="1">
    <location>
        <position position="107"/>
    </location>
    <ligand>
        <name>ATP</name>
        <dbReference type="ChEBI" id="CHEBI:30616"/>
    </ligand>
</feature>
<feature type="binding site" evidence="1">
    <location>
        <position position="199"/>
    </location>
    <ligand>
        <name>Mg(2+)</name>
        <dbReference type="ChEBI" id="CHEBI:18420"/>
    </ligand>
</feature>
<feature type="binding site" evidence="1">
    <location>
        <position position="213"/>
    </location>
    <ligand>
        <name>Mg(2+)</name>
        <dbReference type="ChEBI" id="CHEBI:18420"/>
    </ligand>
</feature>
<feature type="binding site" evidence="1">
    <location>
        <position position="264"/>
    </location>
    <ligand>
        <name>substrate</name>
        <note>ligand shared with subunit alpha</note>
    </ligand>
</feature>
<feature type="binding site" evidence="1">
    <location>
        <begin position="321"/>
        <end position="323"/>
    </location>
    <ligand>
        <name>substrate</name>
        <note>ligand shared with subunit alpha</note>
    </ligand>
</feature>
<protein>
    <recommendedName>
        <fullName evidence="1">Succinate--CoA ligase [ADP-forming] subunit beta</fullName>
        <ecNumber evidence="1">6.2.1.5</ecNumber>
    </recommendedName>
    <alternativeName>
        <fullName evidence="1">Succinyl-CoA synthetase subunit beta</fullName>
        <shortName evidence="1">SCS-beta</shortName>
    </alternativeName>
</protein>
<dbReference type="EC" id="6.2.1.5" evidence="1"/>
<dbReference type="EMBL" id="AM039952">
    <property type="protein sequence ID" value="CAJ25080.1"/>
    <property type="molecule type" value="Genomic_DNA"/>
</dbReference>
<dbReference type="RefSeq" id="WP_007965356.1">
    <property type="nucleotide sequence ID" value="NZ_CP017190.1"/>
</dbReference>
<dbReference type="SMR" id="Q3BQ83"/>
<dbReference type="STRING" id="456327.BJD11_06025"/>
<dbReference type="GeneID" id="97511475"/>
<dbReference type="KEGG" id="xcv:XCV3349"/>
<dbReference type="eggNOG" id="COG0045">
    <property type="taxonomic scope" value="Bacteria"/>
</dbReference>
<dbReference type="HOGENOM" id="CLU_037430_0_2_6"/>
<dbReference type="UniPathway" id="UPA00223">
    <property type="reaction ID" value="UER00999"/>
</dbReference>
<dbReference type="Proteomes" id="UP000007069">
    <property type="component" value="Chromosome"/>
</dbReference>
<dbReference type="GO" id="GO:0042709">
    <property type="term" value="C:succinate-CoA ligase complex"/>
    <property type="evidence" value="ECO:0007669"/>
    <property type="project" value="TreeGrafter"/>
</dbReference>
<dbReference type="GO" id="GO:0005524">
    <property type="term" value="F:ATP binding"/>
    <property type="evidence" value="ECO:0007669"/>
    <property type="project" value="UniProtKB-UniRule"/>
</dbReference>
<dbReference type="GO" id="GO:0000287">
    <property type="term" value="F:magnesium ion binding"/>
    <property type="evidence" value="ECO:0007669"/>
    <property type="project" value="UniProtKB-UniRule"/>
</dbReference>
<dbReference type="GO" id="GO:0004775">
    <property type="term" value="F:succinate-CoA ligase (ADP-forming) activity"/>
    <property type="evidence" value="ECO:0007669"/>
    <property type="project" value="UniProtKB-UniRule"/>
</dbReference>
<dbReference type="GO" id="GO:0004776">
    <property type="term" value="F:succinate-CoA ligase (GDP-forming) activity"/>
    <property type="evidence" value="ECO:0007669"/>
    <property type="project" value="RHEA"/>
</dbReference>
<dbReference type="GO" id="GO:0006104">
    <property type="term" value="P:succinyl-CoA metabolic process"/>
    <property type="evidence" value="ECO:0007669"/>
    <property type="project" value="TreeGrafter"/>
</dbReference>
<dbReference type="GO" id="GO:0006099">
    <property type="term" value="P:tricarboxylic acid cycle"/>
    <property type="evidence" value="ECO:0007669"/>
    <property type="project" value="UniProtKB-UniRule"/>
</dbReference>
<dbReference type="FunFam" id="3.30.1490.20:FF:000002">
    <property type="entry name" value="Succinate--CoA ligase [ADP-forming] subunit beta"/>
    <property type="match status" value="1"/>
</dbReference>
<dbReference type="FunFam" id="3.30.470.20:FF:000002">
    <property type="entry name" value="Succinate--CoA ligase [ADP-forming] subunit beta"/>
    <property type="match status" value="1"/>
</dbReference>
<dbReference type="FunFam" id="3.40.50.261:FF:000001">
    <property type="entry name" value="Succinate--CoA ligase [ADP-forming] subunit beta"/>
    <property type="match status" value="1"/>
</dbReference>
<dbReference type="Gene3D" id="3.30.1490.20">
    <property type="entry name" value="ATP-grasp fold, A domain"/>
    <property type="match status" value="1"/>
</dbReference>
<dbReference type="Gene3D" id="3.30.470.20">
    <property type="entry name" value="ATP-grasp fold, B domain"/>
    <property type="match status" value="1"/>
</dbReference>
<dbReference type="Gene3D" id="3.40.50.261">
    <property type="entry name" value="Succinyl-CoA synthetase domains"/>
    <property type="match status" value="1"/>
</dbReference>
<dbReference type="HAMAP" id="MF_00558">
    <property type="entry name" value="Succ_CoA_beta"/>
    <property type="match status" value="1"/>
</dbReference>
<dbReference type="InterPro" id="IPR011761">
    <property type="entry name" value="ATP-grasp"/>
</dbReference>
<dbReference type="InterPro" id="IPR013650">
    <property type="entry name" value="ATP-grasp_succ-CoA_synth-type"/>
</dbReference>
<dbReference type="InterPro" id="IPR013815">
    <property type="entry name" value="ATP_grasp_subdomain_1"/>
</dbReference>
<dbReference type="InterPro" id="IPR017866">
    <property type="entry name" value="Succ-CoA_synthase_bsu_CS"/>
</dbReference>
<dbReference type="InterPro" id="IPR005811">
    <property type="entry name" value="SUCC_ACL_C"/>
</dbReference>
<dbReference type="InterPro" id="IPR005809">
    <property type="entry name" value="Succ_CoA_ligase-like_bsu"/>
</dbReference>
<dbReference type="InterPro" id="IPR016102">
    <property type="entry name" value="Succinyl-CoA_synth-like"/>
</dbReference>
<dbReference type="NCBIfam" id="NF001913">
    <property type="entry name" value="PRK00696.1"/>
    <property type="match status" value="1"/>
</dbReference>
<dbReference type="NCBIfam" id="TIGR01016">
    <property type="entry name" value="sucCoAbeta"/>
    <property type="match status" value="1"/>
</dbReference>
<dbReference type="PANTHER" id="PTHR11815:SF10">
    <property type="entry name" value="SUCCINATE--COA LIGASE [GDP-FORMING] SUBUNIT BETA, MITOCHONDRIAL"/>
    <property type="match status" value="1"/>
</dbReference>
<dbReference type="PANTHER" id="PTHR11815">
    <property type="entry name" value="SUCCINYL-COA SYNTHETASE BETA CHAIN"/>
    <property type="match status" value="1"/>
</dbReference>
<dbReference type="Pfam" id="PF08442">
    <property type="entry name" value="ATP-grasp_2"/>
    <property type="match status" value="1"/>
</dbReference>
<dbReference type="Pfam" id="PF00549">
    <property type="entry name" value="Ligase_CoA"/>
    <property type="match status" value="1"/>
</dbReference>
<dbReference type="PIRSF" id="PIRSF001554">
    <property type="entry name" value="SucCS_beta"/>
    <property type="match status" value="1"/>
</dbReference>
<dbReference type="SUPFAM" id="SSF56059">
    <property type="entry name" value="Glutathione synthetase ATP-binding domain-like"/>
    <property type="match status" value="1"/>
</dbReference>
<dbReference type="SUPFAM" id="SSF52210">
    <property type="entry name" value="Succinyl-CoA synthetase domains"/>
    <property type="match status" value="1"/>
</dbReference>
<dbReference type="PROSITE" id="PS50975">
    <property type="entry name" value="ATP_GRASP"/>
    <property type="match status" value="1"/>
</dbReference>
<dbReference type="PROSITE" id="PS01217">
    <property type="entry name" value="SUCCINYL_COA_LIG_3"/>
    <property type="match status" value="1"/>
</dbReference>
<name>SUCC_XANE5</name>
<evidence type="ECO:0000255" key="1">
    <source>
        <dbReference type="HAMAP-Rule" id="MF_00558"/>
    </source>
</evidence>
<reference key="1">
    <citation type="journal article" date="2005" name="J. Bacteriol.">
        <title>Insights into genome plasticity and pathogenicity of the plant pathogenic Bacterium Xanthomonas campestris pv. vesicatoria revealed by the complete genome sequence.</title>
        <authorList>
            <person name="Thieme F."/>
            <person name="Koebnik R."/>
            <person name="Bekel T."/>
            <person name="Berger C."/>
            <person name="Boch J."/>
            <person name="Buettner D."/>
            <person name="Caldana C."/>
            <person name="Gaigalat L."/>
            <person name="Goesmann A."/>
            <person name="Kay S."/>
            <person name="Kirchner O."/>
            <person name="Lanz C."/>
            <person name="Linke B."/>
            <person name="McHardy A.C."/>
            <person name="Meyer F."/>
            <person name="Mittenhuber G."/>
            <person name="Nies D.H."/>
            <person name="Niesbach-Kloesgen U."/>
            <person name="Patschkowski T."/>
            <person name="Rueckert C."/>
            <person name="Rupp O."/>
            <person name="Schneiker S."/>
            <person name="Schuster S.C."/>
            <person name="Vorhoelter F.J."/>
            <person name="Weber E."/>
            <person name="Puehler A."/>
            <person name="Bonas U."/>
            <person name="Bartels D."/>
            <person name="Kaiser O."/>
        </authorList>
    </citation>
    <scope>NUCLEOTIDE SEQUENCE [LARGE SCALE GENOMIC DNA]</scope>
    <source>
        <strain>85-10</strain>
    </source>
</reference>
<gene>
    <name evidence="1" type="primary">sucC</name>
    <name type="ordered locus">XCV3349</name>
</gene>
<organism>
    <name type="scientific">Xanthomonas euvesicatoria pv. vesicatoria (strain 85-10)</name>
    <name type="common">Xanthomonas campestris pv. vesicatoria</name>
    <dbReference type="NCBI Taxonomy" id="316273"/>
    <lineage>
        <taxon>Bacteria</taxon>
        <taxon>Pseudomonadati</taxon>
        <taxon>Pseudomonadota</taxon>
        <taxon>Gammaproteobacteria</taxon>
        <taxon>Lysobacterales</taxon>
        <taxon>Lysobacteraceae</taxon>
        <taxon>Xanthomonas</taxon>
    </lineage>
</organism>
<keyword id="KW-0067">ATP-binding</keyword>
<keyword id="KW-0436">Ligase</keyword>
<keyword id="KW-0460">Magnesium</keyword>
<keyword id="KW-0479">Metal-binding</keyword>
<keyword id="KW-0547">Nucleotide-binding</keyword>
<keyword id="KW-0816">Tricarboxylic acid cycle</keyword>
<sequence>MNFHEYQSKQLLAEYGIPVPAGKVAATPDEAVEVANSLGNGPWMVKAQIHAGGRGKAGGVKFCKTTDDVKAAAAKMLGTKMSTYQTAGVELPINLVLVTTAGEIVKELYLSILVDRGTKTITYIASSEGGVEIEQVAAETPELIHALNVDFVEGVQGYHGRDFGFKLGLNAKQAGQFASIMVNLYRLFNEKDLALVEINPLAILDDGNLYALDGKFDSDDNAAFRQKQLVAMRDKTQEDETEVTASELDINYVTMDGNIGCMVNGAGLAMATMDVIKLNGGEPANFLDVGGGANKQRVIEAFKLILSSDKVEGIFVNIFGGIVRCDMIAEGIIAAVKEVGVKVPVVVRLEGTNVEEGKQLLRDSGMAIIPADNINDGAKKVVEAVKNAA</sequence>
<proteinExistence type="inferred from homology"/>